<gene>
    <name type="ordered locus">KPN78578_02510</name>
    <name type="ORF">KPN_00259</name>
</gene>
<organism>
    <name type="scientific">Klebsiella pneumoniae subsp. pneumoniae (strain ATCC 700721 / MGH 78578)</name>
    <dbReference type="NCBI Taxonomy" id="272620"/>
    <lineage>
        <taxon>Bacteria</taxon>
        <taxon>Pseudomonadati</taxon>
        <taxon>Pseudomonadota</taxon>
        <taxon>Gammaproteobacteria</taxon>
        <taxon>Enterobacterales</taxon>
        <taxon>Enterobacteriaceae</taxon>
        <taxon>Klebsiella/Raoultella group</taxon>
        <taxon>Klebsiella</taxon>
        <taxon>Klebsiella pneumoniae complex</taxon>
    </lineage>
</organism>
<dbReference type="EMBL" id="CP000647">
    <property type="protein sequence ID" value="ABR75712.1"/>
    <property type="molecule type" value="Genomic_DNA"/>
</dbReference>
<dbReference type="RefSeq" id="WP_002889848.1">
    <property type="nucleotide sequence ID" value="NC_009648.1"/>
</dbReference>
<dbReference type="STRING" id="272620.KPN_00259"/>
<dbReference type="PaxDb" id="272620-KPN_00259"/>
<dbReference type="EnsemblBacteria" id="ABR75712">
    <property type="protein sequence ID" value="ABR75712"/>
    <property type="gene ID" value="KPN_00259"/>
</dbReference>
<dbReference type="KEGG" id="kpn:KPN_00259"/>
<dbReference type="HOGENOM" id="CLU_164736_0_0_6"/>
<dbReference type="Proteomes" id="UP000000265">
    <property type="component" value="Chromosome"/>
</dbReference>
<dbReference type="HAMAP" id="MF_00827">
    <property type="entry name" value="UPF0386"/>
    <property type="match status" value="1"/>
</dbReference>
<dbReference type="InterPro" id="IPR018654">
    <property type="entry name" value="YjhX_toxin"/>
</dbReference>
<dbReference type="NCBIfam" id="NF010240">
    <property type="entry name" value="PRK13687.1"/>
    <property type="match status" value="1"/>
</dbReference>
<dbReference type="Pfam" id="PF09857">
    <property type="entry name" value="YjhX_toxin"/>
    <property type="match status" value="1"/>
</dbReference>
<protein>
    <recommendedName>
        <fullName evidence="1">UPF0386 protein KPN78578_02510</fullName>
    </recommendedName>
</protein>
<sequence length="85" mass="9538">MNLSRQEQRTLHVLAKGGRIAHVRDTSGRITAVECYTREGLLLSDCTLAVFKKLKTKKLIKSVNGQPYRINTTGLNNVRAQADNR</sequence>
<feature type="chain" id="PRO_1000062708" description="UPF0386 protein KPN78578_02510">
    <location>
        <begin position="1"/>
        <end position="85"/>
    </location>
</feature>
<reference key="1">
    <citation type="submission" date="2006-09" db="EMBL/GenBank/DDBJ databases">
        <authorList>
            <consortium name="The Klebsiella pneumonia Genome Sequencing Project"/>
            <person name="McClelland M."/>
            <person name="Sanderson E.K."/>
            <person name="Spieth J."/>
            <person name="Clifton W.S."/>
            <person name="Latreille P."/>
            <person name="Sabo A."/>
            <person name="Pepin K."/>
            <person name="Bhonagiri V."/>
            <person name="Porwollik S."/>
            <person name="Ali J."/>
            <person name="Wilson R.K."/>
        </authorList>
    </citation>
    <scope>NUCLEOTIDE SEQUENCE [LARGE SCALE GENOMIC DNA]</scope>
    <source>
        <strain>ATCC 700721 / MGH 78578</strain>
    </source>
</reference>
<evidence type="ECO:0000255" key="1">
    <source>
        <dbReference type="HAMAP-Rule" id="MF_00827"/>
    </source>
</evidence>
<proteinExistence type="inferred from homology"/>
<comment type="similarity">
    <text evidence="1">Belongs to the UPF0386 family.</text>
</comment>
<accession>A6T541</accession>
<name>Y251_KLEP7</name>